<organism>
    <name type="scientific">Rotavirus C (strain RVC/Pig/United States/Cowden/1980)</name>
    <name type="common">RV-C</name>
    <dbReference type="NCBI Taxonomy" id="10916"/>
    <lineage>
        <taxon>Viruses</taxon>
        <taxon>Riboviria</taxon>
        <taxon>Orthornavirae</taxon>
        <taxon>Duplornaviricota</taxon>
        <taxon>Resentoviricetes</taxon>
        <taxon>Reovirales</taxon>
        <taxon>Sedoreoviridae</taxon>
        <taxon>Rotavirus</taxon>
        <taxon>Rotavirus C</taxon>
    </lineage>
</organism>
<accession>P30217</accession>
<organismHost>
    <name type="scientific">Sus scrofa</name>
    <name type="common">Pig</name>
    <dbReference type="NCBI Taxonomy" id="9823"/>
</organismHost>
<sequence>MVCTTLYTVCVILCILFIYMLLFRKMFHLIADALVITLIISNCIGWSQGQMFIDDIHYNGNVETIVNATDPFDVRSLCIYFPNAVVGSQGPGKTDGYLNDGNYAQTIAALFETKGFPRGSIVLKTYTKVSDFVDSVEMTCSYNIVIIPDSPTNSESIERIAEWILNVWRCDDMNLDIYTYEQTGIDNLWAAFGSDCDVSVCPLDTTMNGIGCSPASTETYEVLSNDTQLALLNVVDNVKHRIQMNTASCKLKNCIKGEARLNTALIRISTSSSFDNSLSPLNDGQTTRSFKINAKKWWTIFYTIIDYINTIIQTMTPRHRAIYPEGWMLRYA</sequence>
<feature type="signal peptide" evidence="2">
    <location>
        <begin position="1"/>
        <end position="33"/>
    </location>
</feature>
<feature type="chain" id="PRO_0000041130" description="Outer capsid glycoprotein VP7">
    <location>
        <begin position="34"/>
        <end position="332"/>
    </location>
</feature>
<feature type="glycosylation site" description="N-linked (GlcNAc...) asparagine; by host" evidence="2">
    <location>
        <position position="67"/>
    </location>
</feature>
<feature type="glycosylation site" description="N-linked (GlcNAc...) asparagine; by host" evidence="2">
    <location>
        <position position="225"/>
    </location>
</feature>
<comment type="function">
    <text evidence="3">Calcium-binding protein that interacts with rotavirus cell receptors once the initial attachment by VP4 has been achieved. Rotavirus attachment and entry into the host cell probably involves multiple sequential contacts between the outer capsid proteins VP4 and VP7, and the cell receptors. Following entry into the host cell, low intracellular or intravesicular Ca(2+) concentration probably causes the calcium-stabilized VP7 trimers to dissociate from the virion. This step is probably necessary for the membrane-disrupting entry step and the release of VP4, which is locked onto the virion by VP7.</text>
</comment>
<comment type="subunit">
    <text evidence="3">Homotrimer; disulfide-linked. 2 Ca(2+) ions bound at each subunit interface in the trimer hold the trimer together. Interacts with the intermediate capsid protein VP6. Interacts with the outer capsid protein VP5*.</text>
</comment>
<comment type="subcellular location">
    <subcellularLocation>
        <location evidence="3">Virion</location>
    </subcellularLocation>
    <subcellularLocation>
        <location evidence="3">Host endoplasmic reticulum lumen</location>
    </subcellularLocation>
    <text evidence="3">The outer layer contains 780 copies of VP7, grouped as 260 trimers. Immature double-layered particles assembled in the cytoplasm bud across the membrane of the endoplasmic reticulum, acquiring during this process a transient lipid membrane that is modified with the ER resident viral glycoproteins NSP4 and VP7; these enveloped particles also contain VP4. As the particles move towards the interior of the ER. cisternae, the transient lipid membrane and the non-structural protein NSP4 are lost, while the virus surface proteins VP4 and VP7 rearrange to form the outermost virus protein layer, yielding mature infectious triple-layered particles.</text>
</comment>
<comment type="PTM">
    <text evidence="1">N-glycosylated.</text>
</comment>
<comment type="PTM">
    <text evidence="1">Intramolecular disulfide bonds.</text>
</comment>
<comment type="similarity">
    <text evidence="3">Belongs to the rotavirus VP7 family.</text>
</comment>
<name>VP7_ROTPC</name>
<keyword id="KW-0106">Calcium</keyword>
<keyword id="KW-0167">Capsid protein</keyword>
<keyword id="KW-1015">Disulfide bond</keyword>
<keyword id="KW-0325">Glycoprotein</keyword>
<keyword id="KW-1038">Host endoplasmic reticulum</keyword>
<keyword id="KW-0945">Host-virus interaction</keyword>
<keyword id="KW-0479">Metal-binding</keyword>
<keyword id="KW-1152">Outer capsid protein</keyword>
<keyword id="KW-0732">Signal</keyword>
<keyword id="KW-1146">T=13 icosahedral capsid protein</keyword>
<keyword id="KW-0946">Virion</keyword>
<dbReference type="EMBL" id="M61101">
    <property type="protein sequence ID" value="AAA47351.1"/>
    <property type="molecule type" value="mRNA"/>
</dbReference>
<dbReference type="PIR" id="A39988">
    <property type="entry name" value="VGXRCN"/>
</dbReference>
<dbReference type="SMR" id="P30217"/>
<dbReference type="Proteomes" id="UP000008175">
    <property type="component" value="Genome"/>
</dbReference>
<dbReference type="GO" id="GO:0044166">
    <property type="term" value="C:host cell endoplasmic reticulum lumen"/>
    <property type="evidence" value="ECO:0007669"/>
    <property type="project" value="UniProtKB-SubCell"/>
</dbReference>
<dbReference type="GO" id="GO:0039621">
    <property type="term" value="C:T=13 icosahedral viral capsid"/>
    <property type="evidence" value="ECO:0007669"/>
    <property type="project" value="UniProtKB-UniRule"/>
</dbReference>
<dbReference type="GO" id="GO:0039624">
    <property type="term" value="C:viral outer capsid"/>
    <property type="evidence" value="ECO:0007669"/>
    <property type="project" value="UniProtKB-UniRule"/>
</dbReference>
<dbReference type="GO" id="GO:0046872">
    <property type="term" value="F:metal ion binding"/>
    <property type="evidence" value="ECO:0007669"/>
    <property type="project" value="UniProtKB-KW"/>
</dbReference>
<dbReference type="Gene3D" id="3.40.50.11130">
    <property type="entry name" value="Glycoprotein VP7, domain 1"/>
    <property type="match status" value="1"/>
</dbReference>
<dbReference type="Gene3D" id="2.60.120.800">
    <property type="entry name" value="Rotavirus outer-layer protein VP7, domain 2"/>
    <property type="match status" value="1"/>
</dbReference>
<dbReference type="HAMAP" id="MF_04130">
    <property type="entry name" value="Rota_VP7"/>
    <property type="match status" value="1"/>
</dbReference>
<dbReference type="InterPro" id="IPR001963">
    <property type="entry name" value="VP7"/>
</dbReference>
<dbReference type="InterPro" id="IPR042207">
    <property type="entry name" value="VP7_1"/>
</dbReference>
<dbReference type="InterPro" id="IPR042210">
    <property type="entry name" value="VP7_2"/>
</dbReference>
<dbReference type="Pfam" id="PF00434">
    <property type="entry name" value="VP7"/>
    <property type="match status" value="1"/>
</dbReference>
<evidence type="ECO:0000250" key="1"/>
<evidence type="ECO:0000255" key="2"/>
<evidence type="ECO:0000255" key="3">
    <source>
        <dbReference type="HAMAP-Rule" id="MF_04130"/>
    </source>
</evidence>
<protein>
    <recommendedName>
        <fullName evidence="3">Outer capsid glycoprotein VP7</fullName>
    </recommendedName>
</protein>
<reference key="1">
    <citation type="journal article" date="1991" name="Virology">
        <title>Sequence conservation of gene 8 between human and porcine group C rotaviruses and its relationship to the VP7 gene of group A rotaviruses.</title>
        <authorList>
            <person name="Qian Y.A."/>
            <person name="Jiang B."/>
            <person name="Saif L.J."/>
            <person name="Kang S.Y."/>
            <person name="Ishimaru Y."/>
            <person name="Yamashita Y."/>
            <person name="Oseto M."/>
            <person name="Green K.Y."/>
        </authorList>
    </citation>
    <scope>NUCLEOTIDE SEQUENCE [MRNA]</scope>
</reference>
<proteinExistence type="evidence at transcript level"/>